<sequence>MHLIDYLLLLLVGLLALSHGQLHVEHDGESCSNSSHQQILETGEGSPSLKIAPANADFAFRFYYLIASETPGKNIFFSPLSISAAYAMLSLGACSHSRSQILEGLGFNLTELSESDVHRGFQHLLHTLNLPGHGLETRVGSALFLSHNLKFLAKFLNDTMTFYEAKLFHTNFYDTVGTIQLINDHVKKETRGKIVDLVSELKKDVLMVLVNYIYFKALWEKPFISSRTTPKDFYVDENTTVRVPMMLQDQEHHWYLHDRYLPCSVLRMDYKGDTTVFFILPNQGKMGEIEEVLTPEMLMRWNNLLQKRNFYKKLELHFPKFSISGSYVLDQILPRLGFTDLFSKRADLSGITKQQKLEASKSFHKATLDVDEAGTEAAAATSFAIKFFSAQTNRHILRFNRPFLVVIFSTSTQSVLFLGKVVDPTKQ</sequence>
<name>KAIN_PONAB</name>
<protein>
    <recommendedName>
        <fullName>Kallistatin</fullName>
    </recommendedName>
    <alternativeName>
        <fullName>Serpin A4</fullName>
    </alternativeName>
</protein>
<organism>
    <name type="scientific">Pongo abelii</name>
    <name type="common">Sumatran orangutan</name>
    <name type="synonym">Pongo pygmaeus abelii</name>
    <dbReference type="NCBI Taxonomy" id="9601"/>
    <lineage>
        <taxon>Eukaryota</taxon>
        <taxon>Metazoa</taxon>
        <taxon>Chordata</taxon>
        <taxon>Craniata</taxon>
        <taxon>Vertebrata</taxon>
        <taxon>Euteleostomi</taxon>
        <taxon>Mammalia</taxon>
        <taxon>Eutheria</taxon>
        <taxon>Euarchontoglires</taxon>
        <taxon>Primates</taxon>
        <taxon>Haplorrhini</taxon>
        <taxon>Catarrhini</taxon>
        <taxon>Hominidae</taxon>
        <taxon>Pongo</taxon>
    </lineage>
</organism>
<accession>Q5RCR2</accession>
<gene>
    <name type="primary">SERPINA4</name>
</gene>
<comment type="function">
    <text evidence="1">Inhibits human amidolytic and kininogenase activities of tissue kallikrein.</text>
</comment>
<comment type="subunit">
    <text evidence="1">Monomer and some homodimers.</text>
</comment>
<comment type="subcellular location">
    <subcellularLocation>
        <location evidence="1">Secreted</location>
    </subcellularLocation>
</comment>
<comment type="similarity">
    <text evidence="3">Belongs to the serpin family.</text>
</comment>
<evidence type="ECO:0000250" key="1"/>
<evidence type="ECO:0000255" key="2"/>
<evidence type="ECO:0000305" key="3"/>
<dbReference type="EMBL" id="CR858207">
    <property type="protein sequence ID" value="CAH90445.1"/>
    <property type="molecule type" value="mRNA"/>
</dbReference>
<dbReference type="RefSeq" id="NP_001125226.1">
    <property type="nucleotide sequence ID" value="NM_001131754.1"/>
</dbReference>
<dbReference type="RefSeq" id="XP_009247727.1">
    <property type="nucleotide sequence ID" value="XM_009249452.1"/>
</dbReference>
<dbReference type="RefSeq" id="XP_009247728.1">
    <property type="nucleotide sequence ID" value="XM_009249453.1"/>
</dbReference>
<dbReference type="SMR" id="Q5RCR2"/>
<dbReference type="FunCoup" id="Q5RCR2">
    <property type="interactions" value="55"/>
</dbReference>
<dbReference type="STRING" id="9601.ENSPPYP00000006944"/>
<dbReference type="MEROPS" id="I04.003"/>
<dbReference type="GlyCosmos" id="Q5RCR2">
    <property type="glycosylation" value="4 sites, No reported glycans"/>
</dbReference>
<dbReference type="GeneID" id="100172119"/>
<dbReference type="KEGG" id="pon:100172119"/>
<dbReference type="CTD" id="5267"/>
<dbReference type="eggNOG" id="KOG2392">
    <property type="taxonomic scope" value="Eukaryota"/>
</dbReference>
<dbReference type="HOGENOM" id="CLU_023330_2_1_1"/>
<dbReference type="InParanoid" id="Q5RCR2"/>
<dbReference type="OrthoDB" id="671595at2759"/>
<dbReference type="Proteomes" id="UP000001595">
    <property type="component" value="Chromosome 14"/>
</dbReference>
<dbReference type="GO" id="GO:0005615">
    <property type="term" value="C:extracellular space"/>
    <property type="evidence" value="ECO:0007669"/>
    <property type="project" value="InterPro"/>
</dbReference>
<dbReference type="GO" id="GO:0004867">
    <property type="term" value="F:serine-type endopeptidase inhibitor activity"/>
    <property type="evidence" value="ECO:0007669"/>
    <property type="project" value="UniProtKB-KW"/>
</dbReference>
<dbReference type="CDD" id="cd19552">
    <property type="entry name" value="serpinA4_KST"/>
    <property type="match status" value="1"/>
</dbReference>
<dbReference type="FunFam" id="3.30.497.10:FF:000001">
    <property type="entry name" value="Serine protease inhibitor"/>
    <property type="match status" value="1"/>
</dbReference>
<dbReference type="FunFam" id="2.10.310.10:FF:000001">
    <property type="entry name" value="Serpin family A member 1"/>
    <property type="match status" value="1"/>
</dbReference>
<dbReference type="FunFam" id="2.30.39.10:FF:000002">
    <property type="entry name" value="Serpin family D member 1"/>
    <property type="match status" value="1"/>
</dbReference>
<dbReference type="Gene3D" id="2.30.39.10">
    <property type="entry name" value="Alpha-1-antitrypsin, domain 1"/>
    <property type="match status" value="1"/>
</dbReference>
<dbReference type="Gene3D" id="3.30.497.10">
    <property type="entry name" value="Antithrombin, subunit I, domain 2"/>
    <property type="match status" value="1"/>
</dbReference>
<dbReference type="Gene3D" id="2.10.310.10">
    <property type="entry name" value="Serpins superfamily"/>
    <property type="match status" value="1"/>
</dbReference>
<dbReference type="InterPro" id="IPR023795">
    <property type="entry name" value="Serpin_CS"/>
</dbReference>
<dbReference type="InterPro" id="IPR023796">
    <property type="entry name" value="Serpin_dom"/>
</dbReference>
<dbReference type="InterPro" id="IPR000215">
    <property type="entry name" value="Serpin_fam"/>
</dbReference>
<dbReference type="InterPro" id="IPR036186">
    <property type="entry name" value="Serpin_sf"/>
</dbReference>
<dbReference type="InterPro" id="IPR042178">
    <property type="entry name" value="Serpin_sf_1"/>
</dbReference>
<dbReference type="InterPro" id="IPR042185">
    <property type="entry name" value="Serpin_sf_2"/>
</dbReference>
<dbReference type="PANTHER" id="PTHR11461:SF194">
    <property type="entry name" value="KALLISTATIN"/>
    <property type="match status" value="1"/>
</dbReference>
<dbReference type="PANTHER" id="PTHR11461">
    <property type="entry name" value="SERINE PROTEASE INHIBITOR, SERPIN"/>
    <property type="match status" value="1"/>
</dbReference>
<dbReference type="Pfam" id="PF00079">
    <property type="entry name" value="Serpin"/>
    <property type="match status" value="1"/>
</dbReference>
<dbReference type="SMART" id="SM00093">
    <property type="entry name" value="SERPIN"/>
    <property type="match status" value="1"/>
</dbReference>
<dbReference type="SUPFAM" id="SSF56574">
    <property type="entry name" value="Serpins"/>
    <property type="match status" value="1"/>
</dbReference>
<dbReference type="PROSITE" id="PS00284">
    <property type="entry name" value="SERPIN"/>
    <property type="match status" value="1"/>
</dbReference>
<keyword id="KW-0325">Glycoprotein</keyword>
<keyword id="KW-0646">Protease inhibitor</keyword>
<keyword id="KW-1185">Reference proteome</keyword>
<keyword id="KW-0964">Secreted</keyword>
<keyword id="KW-0722">Serine protease inhibitor</keyword>
<keyword id="KW-0732">Signal</keyword>
<proteinExistence type="evidence at transcript level"/>
<feature type="signal peptide" evidence="2">
    <location>
        <begin position="1"/>
        <end position="20"/>
    </location>
</feature>
<feature type="chain" id="PRO_0000032426" description="Kallistatin">
    <location>
        <begin position="21"/>
        <end position="427"/>
    </location>
</feature>
<feature type="site" description="Reactive bond" evidence="1">
    <location>
        <begin position="388"/>
        <end position="389"/>
    </location>
</feature>
<feature type="glycosylation site" description="N-linked (GlcNAc...) asparagine" evidence="2">
    <location>
        <position position="33"/>
    </location>
</feature>
<feature type="glycosylation site" description="N-linked (GlcNAc...) asparagine" evidence="2">
    <location>
        <position position="108"/>
    </location>
</feature>
<feature type="glycosylation site" description="N-linked (GlcNAc...) asparagine" evidence="2">
    <location>
        <position position="157"/>
    </location>
</feature>
<feature type="glycosylation site" description="N-linked (GlcNAc...) asparagine" evidence="2">
    <location>
        <position position="238"/>
    </location>
</feature>
<reference key="1">
    <citation type="submission" date="2004-11" db="EMBL/GenBank/DDBJ databases">
        <authorList>
            <consortium name="The German cDNA consortium"/>
        </authorList>
    </citation>
    <scope>NUCLEOTIDE SEQUENCE [LARGE SCALE MRNA]</scope>
    <source>
        <tissue>Kidney</tissue>
    </source>
</reference>